<name>RL25_METC4</name>
<gene>
    <name evidence="1" type="primary">rplY</name>
    <name evidence="1" type="synonym">ctc</name>
    <name type="ordered locus">Mchl_2698</name>
</gene>
<comment type="function">
    <text evidence="1">This is one of the proteins that binds to the 5S RNA in the ribosome where it forms part of the central protuberance.</text>
</comment>
<comment type="subunit">
    <text evidence="1">Part of the 50S ribosomal subunit; part of the 5S rRNA/L5/L18/L25 subcomplex. Contacts the 5S rRNA. Binds to the 5S rRNA independently of L5 and L18.</text>
</comment>
<comment type="similarity">
    <text evidence="1">Belongs to the bacterial ribosomal protein bL25 family. CTC subfamily.</text>
</comment>
<accession>B7KNU8</accession>
<evidence type="ECO:0000255" key="1">
    <source>
        <dbReference type="HAMAP-Rule" id="MF_01334"/>
    </source>
</evidence>
<evidence type="ECO:0000256" key="2">
    <source>
        <dbReference type="SAM" id="MobiDB-lite"/>
    </source>
</evidence>
<evidence type="ECO:0000305" key="3"/>
<sequence>MSATKTLEAVARDRVGKGAARAVRRQGQIPAVIYGGNQAPQAIAIDLIRARTLIYAGGFKTTVFEIDAGGKKTRAIPRDYQLDPVSGVPLHVDFLRVVAGQTVTVDVPVHFVNEDQAPGIKQKGGTLNVALHTVSLEVAPDQIPDAIEVDLAGREIGDVIHASDLRLPAGTYTGEPTDTVANLLPPTVLGADVEAEEAAVAEAQSAESAEGKAEAEAEATNEKNKSEA</sequence>
<protein>
    <recommendedName>
        <fullName evidence="1">Large ribosomal subunit protein bL25</fullName>
    </recommendedName>
    <alternativeName>
        <fullName evidence="3">50S ribosomal protein L25</fullName>
    </alternativeName>
    <alternativeName>
        <fullName evidence="1">General stress protein CTC</fullName>
    </alternativeName>
</protein>
<dbReference type="EMBL" id="CP001298">
    <property type="protein sequence ID" value="ACK83537.1"/>
    <property type="molecule type" value="Genomic_DNA"/>
</dbReference>
<dbReference type="RefSeq" id="WP_003598131.1">
    <property type="nucleotide sequence ID" value="NC_011757.1"/>
</dbReference>
<dbReference type="SMR" id="B7KNU8"/>
<dbReference type="KEGG" id="mch:Mchl_2698"/>
<dbReference type="HOGENOM" id="CLU_075939_0_0_5"/>
<dbReference type="Proteomes" id="UP000002385">
    <property type="component" value="Chromosome"/>
</dbReference>
<dbReference type="GO" id="GO:0022625">
    <property type="term" value="C:cytosolic large ribosomal subunit"/>
    <property type="evidence" value="ECO:0007669"/>
    <property type="project" value="TreeGrafter"/>
</dbReference>
<dbReference type="GO" id="GO:0008097">
    <property type="term" value="F:5S rRNA binding"/>
    <property type="evidence" value="ECO:0007669"/>
    <property type="project" value="InterPro"/>
</dbReference>
<dbReference type="GO" id="GO:0003735">
    <property type="term" value="F:structural constituent of ribosome"/>
    <property type="evidence" value="ECO:0007669"/>
    <property type="project" value="InterPro"/>
</dbReference>
<dbReference type="GO" id="GO:0006412">
    <property type="term" value="P:translation"/>
    <property type="evidence" value="ECO:0007669"/>
    <property type="project" value="UniProtKB-UniRule"/>
</dbReference>
<dbReference type="CDD" id="cd00495">
    <property type="entry name" value="Ribosomal_L25_TL5_CTC"/>
    <property type="match status" value="1"/>
</dbReference>
<dbReference type="Gene3D" id="2.170.120.20">
    <property type="entry name" value="Ribosomal protein L25, beta domain"/>
    <property type="match status" value="1"/>
</dbReference>
<dbReference type="Gene3D" id="2.40.240.10">
    <property type="entry name" value="Ribosomal Protein L25, Chain P"/>
    <property type="match status" value="1"/>
</dbReference>
<dbReference type="HAMAP" id="MF_01334">
    <property type="entry name" value="Ribosomal_bL25_CTC"/>
    <property type="match status" value="1"/>
</dbReference>
<dbReference type="InterPro" id="IPR020056">
    <property type="entry name" value="Rbsml_bL25/Gln-tRNA_synth_N"/>
</dbReference>
<dbReference type="InterPro" id="IPR011035">
    <property type="entry name" value="Ribosomal_bL25/Gln-tRNA_synth"/>
</dbReference>
<dbReference type="InterPro" id="IPR020057">
    <property type="entry name" value="Ribosomal_bL25_b-dom"/>
</dbReference>
<dbReference type="InterPro" id="IPR037121">
    <property type="entry name" value="Ribosomal_bL25_C"/>
</dbReference>
<dbReference type="InterPro" id="IPR001021">
    <property type="entry name" value="Ribosomal_bL25_long"/>
</dbReference>
<dbReference type="InterPro" id="IPR029751">
    <property type="entry name" value="Ribosomal_L25_dom"/>
</dbReference>
<dbReference type="InterPro" id="IPR020930">
    <property type="entry name" value="Ribosomal_uL5_bac-type"/>
</dbReference>
<dbReference type="NCBIfam" id="TIGR00731">
    <property type="entry name" value="bL25_bact_ctc"/>
    <property type="match status" value="1"/>
</dbReference>
<dbReference type="NCBIfam" id="NF004128">
    <property type="entry name" value="PRK05618.1-2"/>
    <property type="match status" value="1"/>
</dbReference>
<dbReference type="PANTHER" id="PTHR33284">
    <property type="entry name" value="RIBOSOMAL PROTEIN L25/GLN-TRNA SYNTHETASE, ANTI-CODON-BINDING DOMAIN-CONTAINING PROTEIN"/>
    <property type="match status" value="1"/>
</dbReference>
<dbReference type="PANTHER" id="PTHR33284:SF1">
    <property type="entry name" value="RIBOSOMAL PROTEIN L25_GLN-TRNA SYNTHETASE, ANTI-CODON-BINDING DOMAIN-CONTAINING PROTEIN"/>
    <property type="match status" value="1"/>
</dbReference>
<dbReference type="Pfam" id="PF01386">
    <property type="entry name" value="Ribosomal_L25p"/>
    <property type="match status" value="1"/>
</dbReference>
<dbReference type="Pfam" id="PF14693">
    <property type="entry name" value="Ribosomal_TL5_C"/>
    <property type="match status" value="1"/>
</dbReference>
<dbReference type="SUPFAM" id="SSF50715">
    <property type="entry name" value="Ribosomal protein L25-like"/>
    <property type="match status" value="1"/>
</dbReference>
<keyword id="KW-0687">Ribonucleoprotein</keyword>
<keyword id="KW-0689">Ribosomal protein</keyword>
<keyword id="KW-0694">RNA-binding</keyword>
<keyword id="KW-0699">rRNA-binding</keyword>
<feature type="chain" id="PRO_1000166176" description="Large ribosomal subunit protein bL25">
    <location>
        <begin position="1"/>
        <end position="228"/>
    </location>
</feature>
<feature type="region of interest" description="Disordered" evidence="2">
    <location>
        <begin position="196"/>
        <end position="228"/>
    </location>
</feature>
<feature type="compositionally biased region" description="Basic and acidic residues" evidence="2">
    <location>
        <begin position="209"/>
        <end position="228"/>
    </location>
</feature>
<organism>
    <name type="scientific">Methylorubrum extorquens (strain CM4 / NCIMB 13688)</name>
    <name type="common">Methylobacterium extorquens</name>
    <dbReference type="NCBI Taxonomy" id="440085"/>
    <lineage>
        <taxon>Bacteria</taxon>
        <taxon>Pseudomonadati</taxon>
        <taxon>Pseudomonadota</taxon>
        <taxon>Alphaproteobacteria</taxon>
        <taxon>Hyphomicrobiales</taxon>
        <taxon>Methylobacteriaceae</taxon>
        <taxon>Methylorubrum</taxon>
    </lineage>
</organism>
<proteinExistence type="inferred from homology"/>
<reference key="1">
    <citation type="submission" date="2008-12" db="EMBL/GenBank/DDBJ databases">
        <title>Complete sequence of chromosome of Methylobacterium chloromethanicum CM4.</title>
        <authorList>
            <consortium name="US DOE Joint Genome Institute"/>
            <person name="Lucas S."/>
            <person name="Copeland A."/>
            <person name="Lapidus A."/>
            <person name="Glavina del Rio T."/>
            <person name="Dalin E."/>
            <person name="Tice H."/>
            <person name="Bruce D."/>
            <person name="Goodwin L."/>
            <person name="Pitluck S."/>
            <person name="Chertkov O."/>
            <person name="Brettin T."/>
            <person name="Detter J.C."/>
            <person name="Han C."/>
            <person name="Larimer F."/>
            <person name="Land M."/>
            <person name="Hauser L."/>
            <person name="Kyrpides N."/>
            <person name="Mikhailova N."/>
            <person name="Marx C."/>
            <person name="Richardson P."/>
        </authorList>
    </citation>
    <scope>NUCLEOTIDE SEQUENCE [LARGE SCALE GENOMIC DNA]</scope>
    <source>
        <strain>CM4 / NCIMB 13688</strain>
    </source>
</reference>